<sequence>MSQPRPLLSPPETEEQLLAQAQQLSGYTLGELAALAGLVTPENLKRDKGWIGVLLEIWLGASAGSKPEQDFAALGVELKTIPVDSLGRPLETTFVCVAPLTGNSGVTWETSHVRHKLKRVLWIPVEGERSIPLAQRRVGSPLLWSPNEEEDRQLREDWEELMDMIVLGQVERITARHGEYLQIRPKAANAKALTEAIGARGERILTLPRGFYLKKNFTSALLARHFLIQ</sequence>
<dbReference type="EMBL" id="CP000038">
    <property type="protein sequence ID" value="AAZ89583.1"/>
    <property type="molecule type" value="Genomic_DNA"/>
</dbReference>
<dbReference type="RefSeq" id="WP_000082188.1">
    <property type="nucleotide sequence ID" value="NC_007384.1"/>
</dbReference>
<dbReference type="SMR" id="Q3YY29"/>
<dbReference type="GeneID" id="93779167"/>
<dbReference type="KEGG" id="ssn:SSON_2988"/>
<dbReference type="HOGENOM" id="CLU_086669_0_0_6"/>
<dbReference type="Proteomes" id="UP000002529">
    <property type="component" value="Chromosome"/>
</dbReference>
<dbReference type="GO" id="GO:0005737">
    <property type="term" value="C:cytoplasm"/>
    <property type="evidence" value="ECO:0007669"/>
    <property type="project" value="UniProtKB-SubCell"/>
</dbReference>
<dbReference type="GO" id="GO:0003677">
    <property type="term" value="F:DNA binding"/>
    <property type="evidence" value="ECO:0007669"/>
    <property type="project" value="InterPro"/>
</dbReference>
<dbReference type="GO" id="GO:0004519">
    <property type="term" value="F:endonuclease activity"/>
    <property type="evidence" value="ECO:0007669"/>
    <property type="project" value="UniProtKB-UniRule"/>
</dbReference>
<dbReference type="GO" id="GO:0006304">
    <property type="term" value="P:DNA modification"/>
    <property type="evidence" value="ECO:0007669"/>
    <property type="project" value="InterPro"/>
</dbReference>
<dbReference type="GO" id="GO:0006298">
    <property type="term" value="P:mismatch repair"/>
    <property type="evidence" value="ECO:0007669"/>
    <property type="project" value="UniProtKB-UniRule"/>
</dbReference>
<dbReference type="CDD" id="cd00583">
    <property type="entry name" value="MutH-like"/>
    <property type="match status" value="1"/>
</dbReference>
<dbReference type="FunFam" id="3.40.600.10:FF:000001">
    <property type="entry name" value="DNA mismatch repair protein MutH"/>
    <property type="match status" value="1"/>
</dbReference>
<dbReference type="Gene3D" id="3.40.600.10">
    <property type="entry name" value="DNA mismatch repair MutH/Restriction endonuclease, type II"/>
    <property type="match status" value="1"/>
</dbReference>
<dbReference type="HAMAP" id="MF_00759">
    <property type="entry name" value="MutH"/>
    <property type="match status" value="1"/>
</dbReference>
<dbReference type="InterPro" id="IPR004230">
    <property type="entry name" value="DNA_mismatch_repair_MutH"/>
</dbReference>
<dbReference type="InterPro" id="IPR011337">
    <property type="entry name" value="DNA_rep_MutH/RE_typeII_Sau3AI"/>
</dbReference>
<dbReference type="InterPro" id="IPR037057">
    <property type="entry name" value="DNA_rep_MutH/T2_RE_sf"/>
</dbReference>
<dbReference type="InterPro" id="IPR011335">
    <property type="entry name" value="Restrct_endonuc-II-like"/>
</dbReference>
<dbReference type="NCBIfam" id="TIGR02248">
    <property type="entry name" value="mutH_TIGR"/>
    <property type="match status" value="1"/>
</dbReference>
<dbReference type="NCBIfam" id="NF003458">
    <property type="entry name" value="PRK05070.1"/>
    <property type="match status" value="1"/>
</dbReference>
<dbReference type="Pfam" id="PF02976">
    <property type="entry name" value="MutH"/>
    <property type="match status" value="1"/>
</dbReference>
<dbReference type="SMART" id="SM00927">
    <property type="entry name" value="MutH"/>
    <property type="match status" value="1"/>
</dbReference>
<dbReference type="SUPFAM" id="SSF52980">
    <property type="entry name" value="Restriction endonuclease-like"/>
    <property type="match status" value="1"/>
</dbReference>
<reference key="1">
    <citation type="journal article" date="2005" name="Nucleic Acids Res.">
        <title>Genome dynamics and diversity of Shigella species, the etiologic agents of bacillary dysentery.</title>
        <authorList>
            <person name="Yang F."/>
            <person name="Yang J."/>
            <person name="Zhang X."/>
            <person name="Chen L."/>
            <person name="Jiang Y."/>
            <person name="Yan Y."/>
            <person name="Tang X."/>
            <person name="Wang J."/>
            <person name="Xiong Z."/>
            <person name="Dong J."/>
            <person name="Xue Y."/>
            <person name="Zhu Y."/>
            <person name="Xu X."/>
            <person name="Sun L."/>
            <person name="Chen S."/>
            <person name="Nie H."/>
            <person name="Peng J."/>
            <person name="Xu J."/>
            <person name="Wang Y."/>
            <person name="Yuan Z."/>
            <person name="Wen Y."/>
            <person name="Yao Z."/>
            <person name="Shen Y."/>
            <person name="Qiang B."/>
            <person name="Hou Y."/>
            <person name="Yu J."/>
            <person name="Jin Q."/>
        </authorList>
    </citation>
    <scope>NUCLEOTIDE SEQUENCE [LARGE SCALE GENOMIC DNA]</scope>
    <source>
        <strain>Ss046</strain>
    </source>
</reference>
<evidence type="ECO:0000255" key="1">
    <source>
        <dbReference type="HAMAP-Rule" id="MF_00759"/>
    </source>
</evidence>
<keyword id="KW-0963">Cytoplasm</keyword>
<keyword id="KW-0227">DNA damage</keyword>
<keyword id="KW-0234">DNA repair</keyword>
<keyword id="KW-0255">Endonuclease</keyword>
<keyword id="KW-0378">Hydrolase</keyword>
<keyword id="KW-0540">Nuclease</keyword>
<keyword id="KW-1185">Reference proteome</keyword>
<gene>
    <name evidence="1" type="primary">mutH</name>
    <name type="ordered locus">SSON_2988</name>
</gene>
<name>MUTH_SHISS</name>
<accession>Q3YY29</accession>
<proteinExistence type="inferred from homology"/>
<comment type="function">
    <text evidence="1">Sequence-specific endonuclease that cleaves unmethylated GATC sequences. It is involved in DNA mismatch repair.</text>
</comment>
<comment type="subcellular location">
    <subcellularLocation>
        <location evidence="1">Cytoplasm</location>
    </subcellularLocation>
</comment>
<comment type="similarity">
    <text evidence="1">Belongs to the MutH family.</text>
</comment>
<organism>
    <name type="scientific">Shigella sonnei (strain Ss046)</name>
    <dbReference type="NCBI Taxonomy" id="300269"/>
    <lineage>
        <taxon>Bacteria</taxon>
        <taxon>Pseudomonadati</taxon>
        <taxon>Pseudomonadota</taxon>
        <taxon>Gammaproteobacteria</taxon>
        <taxon>Enterobacterales</taxon>
        <taxon>Enterobacteriaceae</taxon>
        <taxon>Shigella</taxon>
    </lineage>
</organism>
<feature type="chain" id="PRO_1000046716" description="DNA mismatch repair protein MutH">
    <location>
        <begin position="1"/>
        <end position="229"/>
    </location>
</feature>
<protein>
    <recommendedName>
        <fullName evidence="1">DNA mismatch repair protein MutH</fullName>
    </recommendedName>
    <alternativeName>
        <fullName evidence="1">Methyl-directed mismatch repair protein</fullName>
    </alternativeName>
</protein>